<evidence type="ECO:0000255" key="1">
    <source>
        <dbReference type="HAMAP-Rule" id="MF_01342"/>
    </source>
</evidence>
<evidence type="ECO:0000256" key="2">
    <source>
        <dbReference type="SAM" id="MobiDB-lite"/>
    </source>
</evidence>
<evidence type="ECO:0000305" key="3"/>
<keyword id="KW-0150">Chloroplast</keyword>
<keyword id="KW-0934">Plastid</keyword>
<keyword id="KW-0687">Ribonucleoprotein</keyword>
<keyword id="KW-0689">Ribosomal protein</keyword>
<feature type="chain" id="PRO_0000354640" description="Large ribosomal subunit protein uL16c">
    <location>
        <begin position="1"/>
        <end position="135"/>
    </location>
</feature>
<feature type="region of interest" description="Disordered" evidence="2">
    <location>
        <begin position="1"/>
        <end position="20"/>
    </location>
</feature>
<feature type="compositionally biased region" description="Basic residues" evidence="2">
    <location>
        <begin position="1"/>
        <end position="17"/>
    </location>
</feature>
<sequence length="135" mass="15331">MLSPKRTRFRKQHRGRMKGTSYRGNHISFGRYALQALEPSWITARQIEAGRRAISRYARRGGKIWVRLFPDKPVTLRPAETRMGSGKGSPEYWVSVVKPGRILYEIGGVSENVARTAMLLAASKMPIRTQFIIEG</sequence>
<protein>
    <recommendedName>
        <fullName evidence="1">Large ribosomal subunit protein uL16c</fullName>
    </recommendedName>
    <alternativeName>
        <fullName evidence="3">50S ribosomal protein L16, chloroplastic</fullName>
    </alternativeName>
</protein>
<name>RK16_LEMMI</name>
<organism>
    <name type="scientific">Lemna minor</name>
    <name type="common">Common duckweed</name>
    <dbReference type="NCBI Taxonomy" id="4472"/>
    <lineage>
        <taxon>Eukaryota</taxon>
        <taxon>Viridiplantae</taxon>
        <taxon>Streptophyta</taxon>
        <taxon>Embryophyta</taxon>
        <taxon>Tracheophyta</taxon>
        <taxon>Spermatophyta</taxon>
        <taxon>Magnoliopsida</taxon>
        <taxon>Liliopsida</taxon>
        <taxon>Araceae</taxon>
        <taxon>Lemnoideae</taxon>
        <taxon>Lemna</taxon>
    </lineage>
</organism>
<dbReference type="EMBL" id="DQ400350">
    <property type="protein sequence ID" value="ABD48532.1"/>
    <property type="molecule type" value="Genomic_DNA"/>
</dbReference>
<dbReference type="RefSeq" id="YP_001595545.1">
    <property type="nucleotide sequence ID" value="NC_010109.1"/>
</dbReference>
<dbReference type="SMR" id="A9L9D3"/>
<dbReference type="GeneID" id="5787575"/>
<dbReference type="GO" id="GO:0009507">
    <property type="term" value="C:chloroplast"/>
    <property type="evidence" value="ECO:0007669"/>
    <property type="project" value="UniProtKB-SubCell"/>
</dbReference>
<dbReference type="GO" id="GO:0005762">
    <property type="term" value="C:mitochondrial large ribosomal subunit"/>
    <property type="evidence" value="ECO:0007669"/>
    <property type="project" value="TreeGrafter"/>
</dbReference>
<dbReference type="GO" id="GO:0019843">
    <property type="term" value="F:rRNA binding"/>
    <property type="evidence" value="ECO:0007669"/>
    <property type="project" value="InterPro"/>
</dbReference>
<dbReference type="GO" id="GO:0003735">
    <property type="term" value="F:structural constituent of ribosome"/>
    <property type="evidence" value="ECO:0007669"/>
    <property type="project" value="InterPro"/>
</dbReference>
<dbReference type="GO" id="GO:0032543">
    <property type="term" value="P:mitochondrial translation"/>
    <property type="evidence" value="ECO:0007669"/>
    <property type="project" value="TreeGrafter"/>
</dbReference>
<dbReference type="CDD" id="cd01433">
    <property type="entry name" value="Ribosomal_L16_L10e"/>
    <property type="match status" value="1"/>
</dbReference>
<dbReference type="FunFam" id="3.90.1170.10:FF:000001">
    <property type="entry name" value="50S ribosomal protein L16"/>
    <property type="match status" value="1"/>
</dbReference>
<dbReference type="Gene3D" id="3.90.1170.10">
    <property type="entry name" value="Ribosomal protein L10e/L16"/>
    <property type="match status" value="1"/>
</dbReference>
<dbReference type="HAMAP" id="MF_01342">
    <property type="entry name" value="Ribosomal_uL16"/>
    <property type="match status" value="1"/>
</dbReference>
<dbReference type="InterPro" id="IPR047873">
    <property type="entry name" value="Ribosomal_uL16"/>
</dbReference>
<dbReference type="InterPro" id="IPR000114">
    <property type="entry name" value="Ribosomal_uL16_bact-type"/>
</dbReference>
<dbReference type="InterPro" id="IPR020798">
    <property type="entry name" value="Ribosomal_uL16_CS"/>
</dbReference>
<dbReference type="InterPro" id="IPR016180">
    <property type="entry name" value="Ribosomal_uL16_dom"/>
</dbReference>
<dbReference type="InterPro" id="IPR036920">
    <property type="entry name" value="Ribosomal_uL16_sf"/>
</dbReference>
<dbReference type="NCBIfam" id="TIGR01164">
    <property type="entry name" value="rplP_bact"/>
    <property type="match status" value="1"/>
</dbReference>
<dbReference type="PANTHER" id="PTHR12220">
    <property type="entry name" value="50S/60S RIBOSOMAL PROTEIN L16"/>
    <property type="match status" value="1"/>
</dbReference>
<dbReference type="PANTHER" id="PTHR12220:SF13">
    <property type="entry name" value="LARGE RIBOSOMAL SUBUNIT PROTEIN UL16M"/>
    <property type="match status" value="1"/>
</dbReference>
<dbReference type="Pfam" id="PF00252">
    <property type="entry name" value="Ribosomal_L16"/>
    <property type="match status" value="1"/>
</dbReference>
<dbReference type="PRINTS" id="PR00060">
    <property type="entry name" value="RIBOSOMALL16"/>
</dbReference>
<dbReference type="SUPFAM" id="SSF54686">
    <property type="entry name" value="Ribosomal protein L16p/L10e"/>
    <property type="match status" value="1"/>
</dbReference>
<dbReference type="PROSITE" id="PS00586">
    <property type="entry name" value="RIBOSOMAL_L16_1"/>
    <property type="match status" value="1"/>
</dbReference>
<dbReference type="PROSITE" id="PS00701">
    <property type="entry name" value="RIBOSOMAL_L16_2"/>
    <property type="match status" value="1"/>
</dbReference>
<geneLocation type="chloroplast"/>
<accession>A9L9D3</accession>
<comment type="subunit">
    <text evidence="1">Part of the 50S ribosomal subunit.</text>
</comment>
<comment type="subcellular location">
    <subcellularLocation>
        <location>Plastid</location>
        <location>Chloroplast</location>
    </subcellularLocation>
</comment>
<comment type="similarity">
    <text evidence="1">Belongs to the universal ribosomal protein uL16 family.</text>
</comment>
<reference key="1">
    <citation type="journal article" date="2008" name="J. Mol. Evol.">
        <title>Complete sequence of the Duckweed (Lemna minor) chloroplast genome: structural organization and phylogenetic relationships to other angiosperms.</title>
        <authorList>
            <person name="Mardanov A.V."/>
            <person name="Ravin N.V."/>
            <person name="Kuznetsov B.B."/>
            <person name="Samigullin T.H."/>
            <person name="Antonov A.S."/>
            <person name="Kolganova T.V."/>
            <person name="Skyabin K.G."/>
        </authorList>
    </citation>
    <scope>NUCLEOTIDE SEQUENCE [LARGE SCALE GENOMIC DNA]</scope>
</reference>
<proteinExistence type="inferred from homology"/>
<gene>
    <name evidence="1" type="primary">rpl16</name>
</gene>